<feature type="chain" id="PRO_1000202492" description="Transcription antitermination protein NusB">
    <location>
        <begin position="1"/>
        <end position="147"/>
    </location>
</feature>
<sequence length="147" mass="16551">MKVTAATRSRARHFAMQAIYQWQMNGNPLHVIEAEFHTDNDMSKVDTEYFHELFHGVAADKSALDACFLPHLKSLPLEKLDPVTLALLRQATFELKNRVDVPYKVVINEAVNLAKKFGAEDSHKFVNGVLDKVAADLRALEFNAARS</sequence>
<comment type="function">
    <text evidence="1">Involved in transcription antitermination. Required for transcription of ribosomal RNA (rRNA) genes. Binds specifically to the boxA antiterminator sequence of the ribosomal RNA (rrn) operons.</text>
</comment>
<comment type="similarity">
    <text evidence="1">Belongs to the NusB family.</text>
</comment>
<name>NUSB_TERTT</name>
<evidence type="ECO:0000255" key="1">
    <source>
        <dbReference type="HAMAP-Rule" id="MF_00073"/>
    </source>
</evidence>
<gene>
    <name evidence="1" type="primary">nusB</name>
    <name type="ordered locus">TERTU_3700</name>
</gene>
<proteinExistence type="inferred from homology"/>
<protein>
    <recommendedName>
        <fullName evidence="1">Transcription antitermination protein NusB</fullName>
    </recommendedName>
    <alternativeName>
        <fullName evidence="1">Antitermination factor NusB</fullName>
    </alternativeName>
</protein>
<accession>C5BS84</accession>
<reference key="1">
    <citation type="journal article" date="2009" name="PLoS ONE">
        <title>The complete genome of Teredinibacter turnerae T7901: an intracellular endosymbiont of marine wood-boring bivalves (shipworms).</title>
        <authorList>
            <person name="Yang J.C."/>
            <person name="Madupu R."/>
            <person name="Durkin A.S."/>
            <person name="Ekborg N.A."/>
            <person name="Pedamallu C.S."/>
            <person name="Hostetler J.B."/>
            <person name="Radune D."/>
            <person name="Toms B.S."/>
            <person name="Henrissat B."/>
            <person name="Coutinho P.M."/>
            <person name="Schwarz S."/>
            <person name="Field L."/>
            <person name="Trindade-Silva A.E."/>
            <person name="Soares C.A.G."/>
            <person name="Elshahawi S."/>
            <person name="Hanora A."/>
            <person name="Schmidt E.W."/>
            <person name="Haygood M.G."/>
            <person name="Posfai J."/>
            <person name="Benner J."/>
            <person name="Madinger C."/>
            <person name="Nove J."/>
            <person name="Anton B."/>
            <person name="Chaudhary K."/>
            <person name="Foster J."/>
            <person name="Holman A."/>
            <person name="Kumar S."/>
            <person name="Lessard P.A."/>
            <person name="Luyten Y.A."/>
            <person name="Slatko B."/>
            <person name="Wood N."/>
            <person name="Wu B."/>
            <person name="Teplitski M."/>
            <person name="Mougous J.D."/>
            <person name="Ward N."/>
            <person name="Eisen J.A."/>
            <person name="Badger J.H."/>
            <person name="Distel D.L."/>
        </authorList>
    </citation>
    <scope>NUCLEOTIDE SEQUENCE [LARGE SCALE GENOMIC DNA]</scope>
    <source>
        <strain>ATCC 39867 / T7901</strain>
    </source>
</reference>
<organism>
    <name type="scientific">Teredinibacter turnerae (strain ATCC 39867 / T7901)</name>
    <dbReference type="NCBI Taxonomy" id="377629"/>
    <lineage>
        <taxon>Bacteria</taxon>
        <taxon>Pseudomonadati</taxon>
        <taxon>Pseudomonadota</taxon>
        <taxon>Gammaproteobacteria</taxon>
        <taxon>Cellvibrionales</taxon>
        <taxon>Cellvibrionaceae</taxon>
        <taxon>Teredinibacter</taxon>
    </lineage>
</organism>
<keyword id="KW-1185">Reference proteome</keyword>
<keyword id="KW-0694">RNA-binding</keyword>
<keyword id="KW-0804">Transcription</keyword>
<keyword id="KW-0889">Transcription antitermination</keyword>
<keyword id="KW-0805">Transcription regulation</keyword>
<dbReference type="EMBL" id="CP001614">
    <property type="protein sequence ID" value="ACR10941.1"/>
    <property type="molecule type" value="Genomic_DNA"/>
</dbReference>
<dbReference type="RefSeq" id="WP_015817053.1">
    <property type="nucleotide sequence ID" value="NC_012997.1"/>
</dbReference>
<dbReference type="SMR" id="C5BS84"/>
<dbReference type="STRING" id="377629.TERTU_3700"/>
<dbReference type="GeneID" id="58411007"/>
<dbReference type="GeneID" id="93855225"/>
<dbReference type="KEGG" id="ttu:TERTU_3700"/>
<dbReference type="eggNOG" id="COG0781">
    <property type="taxonomic scope" value="Bacteria"/>
</dbReference>
<dbReference type="HOGENOM" id="CLU_087843_4_1_6"/>
<dbReference type="OrthoDB" id="9789556at2"/>
<dbReference type="Proteomes" id="UP000009080">
    <property type="component" value="Chromosome"/>
</dbReference>
<dbReference type="GO" id="GO:0005829">
    <property type="term" value="C:cytosol"/>
    <property type="evidence" value="ECO:0007669"/>
    <property type="project" value="TreeGrafter"/>
</dbReference>
<dbReference type="GO" id="GO:0003723">
    <property type="term" value="F:RNA binding"/>
    <property type="evidence" value="ECO:0007669"/>
    <property type="project" value="UniProtKB-UniRule"/>
</dbReference>
<dbReference type="GO" id="GO:0006353">
    <property type="term" value="P:DNA-templated transcription termination"/>
    <property type="evidence" value="ECO:0007669"/>
    <property type="project" value="UniProtKB-UniRule"/>
</dbReference>
<dbReference type="GO" id="GO:0031564">
    <property type="term" value="P:transcription antitermination"/>
    <property type="evidence" value="ECO:0007669"/>
    <property type="project" value="UniProtKB-KW"/>
</dbReference>
<dbReference type="CDD" id="cd00619">
    <property type="entry name" value="Terminator_NusB"/>
    <property type="match status" value="1"/>
</dbReference>
<dbReference type="Gene3D" id="1.10.940.10">
    <property type="entry name" value="NusB-like"/>
    <property type="match status" value="1"/>
</dbReference>
<dbReference type="HAMAP" id="MF_00073">
    <property type="entry name" value="NusB"/>
    <property type="match status" value="1"/>
</dbReference>
<dbReference type="InterPro" id="IPR035926">
    <property type="entry name" value="NusB-like_sf"/>
</dbReference>
<dbReference type="InterPro" id="IPR011605">
    <property type="entry name" value="NusB_fam"/>
</dbReference>
<dbReference type="InterPro" id="IPR006027">
    <property type="entry name" value="NusB_RsmB_TIM44"/>
</dbReference>
<dbReference type="NCBIfam" id="TIGR01951">
    <property type="entry name" value="nusB"/>
    <property type="match status" value="1"/>
</dbReference>
<dbReference type="PANTHER" id="PTHR11078:SF3">
    <property type="entry name" value="ANTITERMINATION NUSB DOMAIN-CONTAINING PROTEIN"/>
    <property type="match status" value="1"/>
</dbReference>
<dbReference type="PANTHER" id="PTHR11078">
    <property type="entry name" value="N UTILIZATION SUBSTANCE PROTEIN B-RELATED"/>
    <property type="match status" value="1"/>
</dbReference>
<dbReference type="Pfam" id="PF01029">
    <property type="entry name" value="NusB"/>
    <property type="match status" value="1"/>
</dbReference>
<dbReference type="SUPFAM" id="SSF48013">
    <property type="entry name" value="NusB-like"/>
    <property type="match status" value="1"/>
</dbReference>